<evidence type="ECO:0000255" key="1">
    <source>
        <dbReference type="HAMAP-Rule" id="MF_01961"/>
    </source>
</evidence>
<protein>
    <recommendedName>
        <fullName evidence="1">Catalase-peroxidase</fullName>
        <shortName evidence="1">CP</shortName>
        <ecNumber evidence="1">1.11.1.21</ecNumber>
    </recommendedName>
    <alternativeName>
        <fullName evidence="1">Peroxidase/catalase</fullName>
    </alternativeName>
</protein>
<dbReference type="EC" id="1.11.1.21" evidence="1"/>
<dbReference type="EMBL" id="CP000544">
    <property type="protein sequence ID" value="ABM61333.1"/>
    <property type="molecule type" value="Genomic_DNA"/>
</dbReference>
<dbReference type="RefSeq" id="WP_011813356.1">
    <property type="nucleotide sequence ID" value="NC_008789.1"/>
</dbReference>
<dbReference type="SMR" id="A1WUH1"/>
<dbReference type="STRING" id="349124.Hhal_0547"/>
<dbReference type="PeroxiBase" id="3561">
    <property type="entry name" value="HhCP01"/>
</dbReference>
<dbReference type="KEGG" id="hha:Hhal_0547"/>
<dbReference type="eggNOG" id="COG0376">
    <property type="taxonomic scope" value="Bacteria"/>
</dbReference>
<dbReference type="HOGENOM" id="CLU_025424_2_0_6"/>
<dbReference type="OrthoDB" id="9759743at2"/>
<dbReference type="Proteomes" id="UP000000647">
    <property type="component" value="Chromosome"/>
</dbReference>
<dbReference type="GO" id="GO:0005829">
    <property type="term" value="C:cytosol"/>
    <property type="evidence" value="ECO:0007669"/>
    <property type="project" value="TreeGrafter"/>
</dbReference>
<dbReference type="GO" id="GO:0004096">
    <property type="term" value="F:catalase activity"/>
    <property type="evidence" value="ECO:0007669"/>
    <property type="project" value="UniProtKB-UniRule"/>
</dbReference>
<dbReference type="GO" id="GO:0020037">
    <property type="term" value="F:heme binding"/>
    <property type="evidence" value="ECO:0007669"/>
    <property type="project" value="InterPro"/>
</dbReference>
<dbReference type="GO" id="GO:0046872">
    <property type="term" value="F:metal ion binding"/>
    <property type="evidence" value="ECO:0007669"/>
    <property type="project" value="UniProtKB-KW"/>
</dbReference>
<dbReference type="GO" id="GO:0070301">
    <property type="term" value="P:cellular response to hydrogen peroxide"/>
    <property type="evidence" value="ECO:0007669"/>
    <property type="project" value="TreeGrafter"/>
</dbReference>
<dbReference type="GO" id="GO:0042744">
    <property type="term" value="P:hydrogen peroxide catabolic process"/>
    <property type="evidence" value="ECO:0007669"/>
    <property type="project" value="UniProtKB-KW"/>
</dbReference>
<dbReference type="CDD" id="cd00649">
    <property type="entry name" value="catalase_peroxidase_1"/>
    <property type="match status" value="1"/>
</dbReference>
<dbReference type="CDD" id="cd08200">
    <property type="entry name" value="catalase_peroxidase_2"/>
    <property type="match status" value="1"/>
</dbReference>
<dbReference type="FunFam" id="1.10.420.10:FF:000004">
    <property type="entry name" value="Catalase-peroxidase"/>
    <property type="match status" value="1"/>
</dbReference>
<dbReference type="FunFam" id="1.10.520.10:FF:000002">
    <property type="entry name" value="Catalase-peroxidase"/>
    <property type="match status" value="1"/>
</dbReference>
<dbReference type="Gene3D" id="1.10.520.10">
    <property type="match status" value="2"/>
</dbReference>
<dbReference type="Gene3D" id="1.10.420.10">
    <property type="entry name" value="Peroxidase, domain 2"/>
    <property type="match status" value="2"/>
</dbReference>
<dbReference type="HAMAP" id="MF_01961">
    <property type="entry name" value="Catal_peroxid"/>
    <property type="match status" value="1"/>
</dbReference>
<dbReference type="InterPro" id="IPR000763">
    <property type="entry name" value="Catalase_peroxidase"/>
</dbReference>
<dbReference type="InterPro" id="IPR002016">
    <property type="entry name" value="Haem_peroxidase"/>
</dbReference>
<dbReference type="InterPro" id="IPR010255">
    <property type="entry name" value="Haem_peroxidase_sf"/>
</dbReference>
<dbReference type="InterPro" id="IPR019794">
    <property type="entry name" value="Peroxidases_AS"/>
</dbReference>
<dbReference type="NCBIfam" id="TIGR00198">
    <property type="entry name" value="cat_per_HPI"/>
    <property type="match status" value="1"/>
</dbReference>
<dbReference type="NCBIfam" id="NF011635">
    <property type="entry name" value="PRK15061.1"/>
    <property type="match status" value="1"/>
</dbReference>
<dbReference type="PANTHER" id="PTHR30555:SF6">
    <property type="entry name" value="CATALASE-PEROXIDASE"/>
    <property type="match status" value="1"/>
</dbReference>
<dbReference type="PANTHER" id="PTHR30555">
    <property type="entry name" value="HYDROPEROXIDASE I, BIFUNCTIONAL CATALASE-PEROXIDASE"/>
    <property type="match status" value="1"/>
</dbReference>
<dbReference type="Pfam" id="PF00141">
    <property type="entry name" value="peroxidase"/>
    <property type="match status" value="2"/>
</dbReference>
<dbReference type="PRINTS" id="PR00460">
    <property type="entry name" value="BPEROXIDASE"/>
</dbReference>
<dbReference type="PRINTS" id="PR00458">
    <property type="entry name" value="PEROXIDASE"/>
</dbReference>
<dbReference type="SUPFAM" id="SSF48113">
    <property type="entry name" value="Heme-dependent peroxidases"/>
    <property type="match status" value="2"/>
</dbReference>
<dbReference type="PROSITE" id="PS00436">
    <property type="entry name" value="PEROXIDASE_2"/>
    <property type="match status" value="1"/>
</dbReference>
<dbReference type="PROSITE" id="PS50873">
    <property type="entry name" value="PEROXIDASE_4"/>
    <property type="match status" value="1"/>
</dbReference>
<proteinExistence type="inferred from homology"/>
<accession>A1WUH1</accession>
<reference key="1">
    <citation type="submission" date="2006-12" db="EMBL/GenBank/DDBJ databases">
        <title>Complete sequence of Halorhodospira halophila SL1.</title>
        <authorList>
            <consortium name="US DOE Joint Genome Institute"/>
            <person name="Copeland A."/>
            <person name="Lucas S."/>
            <person name="Lapidus A."/>
            <person name="Barry K."/>
            <person name="Detter J.C."/>
            <person name="Glavina del Rio T."/>
            <person name="Hammon N."/>
            <person name="Israni S."/>
            <person name="Dalin E."/>
            <person name="Tice H."/>
            <person name="Pitluck S."/>
            <person name="Saunders E."/>
            <person name="Brettin T."/>
            <person name="Bruce D."/>
            <person name="Han C."/>
            <person name="Tapia R."/>
            <person name="Schmutz J."/>
            <person name="Larimer F."/>
            <person name="Land M."/>
            <person name="Hauser L."/>
            <person name="Kyrpides N."/>
            <person name="Mikhailova N."/>
            <person name="Hoff W."/>
            <person name="Richardson P."/>
        </authorList>
    </citation>
    <scope>NUCLEOTIDE SEQUENCE [LARGE SCALE GENOMIC DNA]</scope>
    <source>
        <strain>DSM 244 / SL1</strain>
    </source>
</reference>
<sequence>MADQQKAGGCPVMHGAMTQVGESNLDMWPNALNLDILHQHDRKPDPMGEGFNYREEVKKLDLDAVKQDLHQLMTDSQAWWPADWGHYGGLMIRMAWHAAGTYRVADGRGGGGTGNQRFAPINSWPDNVNLDKARRLLWPIKKKYGNRLSWADLIILAGNVAYESMGLKTFGFSLGREDIWHPEKDIYWGSEKEWLAPSDSEDSRYGEDRASLENPLAAVMMGLIYVNPEGVDGNPDPLRTAEDVRITFERMAMNDEETVALTAGGHTVGKCHGNGDVENLGPDPESADVEEQGLGWNNKVTRGVGRDTVSSGIEGAWTTYPTRWDNGYFHLLLNYEWELTKSPAGAWQWEPVDIKEEDKPVDVEDPSIRLNPIMTDADMAMKMDPAYRKISERFYNDPAYFDEVFARAWFKLTHRDLGPRTRYIGPEAPQEDLIWQDPVPAGRTDYDVEALKAKIADSGLSIGEMVSTAWDSARTFRGSDNRGGANGARIRLAPQKDWEGNEPERLSKVLGVLEGIAADAGASLADTIVLAGNVGIEQAARAAGHDITVPFAPGRGDASQEMTDVDSFQYLEPLADGYRNWVKKEYAVQPEEMMLDRTQLMGLTAPEMTVLVGGMRVLGTNHGGTKHGVLTDREGQLTNDFFVNLTDMAYTWKPVGSNRYEIRQRSSDAVKWTATRVDLVFGSNSILRSYAEVYAQDDNREKFVHDFVAAWTKVMNADRFDLVA</sequence>
<keyword id="KW-0349">Heme</keyword>
<keyword id="KW-0376">Hydrogen peroxide</keyword>
<keyword id="KW-0408">Iron</keyword>
<keyword id="KW-0479">Metal-binding</keyword>
<keyword id="KW-0560">Oxidoreductase</keyword>
<keyword id="KW-0575">Peroxidase</keyword>
<keyword id="KW-1185">Reference proteome</keyword>
<feature type="chain" id="PRO_0000354807" description="Catalase-peroxidase">
    <location>
        <begin position="1"/>
        <end position="724"/>
    </location>
</feature>
<feature type="active site" description="Proton acceptor" evidence="1">
    <location>
        <position position="97"/>
    </location>
</feature>
<feature type="binding site" description="axial binding residue" evidence="1">
    <location>
        <position position="266"/>
    </location>
    <ligand>
        <name>heme b</name>
        <dbReference type="ChEBI" id="CHEBI:60344"/>
    </ligand>
    <ligandPart>
        <name>Fe</name>
        <dbReference type="ChEBI" id="CHEBI:18248"/>
    </ligandPart>
</feature>
<feature type="site" description="Transition state stabilizer" evidence="1">
    <location>
        <position position="93"/>
    </location>
</feature>
<feature type="cross-link" description="Tryptophyl-tyrosyl-methioninium (Trp-Tyr) (with M-251)" evidence="1">
    <location>
        <begin position="96"/>
        <end position="225"/>
    </location>
</feature>
<feature type="cross-link" description="Tryptophyl-tyrosyl-methioninium (Tyr-Met) (with W-96)" evidence="1">
    <location>
        <begin position="225"/>
        <end position="251"/>
    </location>
</feature>
<organism>
    <name type="scientific">Halorhodospira halophila (strain DSM 244 / SL1)</name>
    <name type="common">Ectothiorhodospira halophila (strain DSM 244 / SL1)</name>
    <dbReference type="NCBI Taxonomy" id="349124"/>
    <lineage>
        <taxon>Bacteria</taxon>
        <taxon>Pseudomonadati</taxon>
        <taxon>Pseudomonadota</taxon>
        <taxon>Gammaproteobacteria</taxon>
        <taxon>Chromatiales</taxon>
        <taxon>Ectothiorhodospiraceae</taxon>
        <taxon>Halorhodospira</taxon>
    </lineage>
</organism>
<name>KATG_HALHL</name>
<gene>
    <name evidence="1" type="primary">katG</name>
    <name type="ordered locus">Hhal_0547</name>
</gene>
<comment type="function">
    <text evidence="1">Bifunctional enzyme with both catalase and broad-spectrum peroxidase activity.</text>
</comment>
<comment type="catalytic activity">
    <reaction evidence="1">
        <text>H2O2 + AH2 = A + 2 H2O</text>
        <dbReference type="Rhea" id="RHEA:30275"/>
        <dbReference type="ChEBI" id="CHEBI:13193"/>
        <dbReference type="ChEBI" id="CHEBI:15377"/>
        <dbReference type="ChEBI" id="CHEBI:16240"/>
        <dbReference type="ChEBI" id="CHEBI:17499"/>
        <dbReference type="EC" id="1.11.1.21"/>
    </reaction>
</comment>
<comment type="catalytic activity">
    <reaction evidence="1">
        <text>2 H2O2 = O2 + 2 H2O</text>
        <dbReference type="Rhea" id="RHEA:20309"/>
        <dbReference type="ChEBI" id="CHEBI:15377"/>
        <dbReference type="ChEBI" id="CHEBI:15379"/>
        <dbReference type="ChEBI" id="CHEBI:16240"/>
        <dbReference type="EC" id="1.11.1.21"/>
    </reaction>
</comment>
<comment type="cofactor">
    <cofactor evidence="1">
        <name>heme b</name>
        <dbReference type="ChEBI" id="CHEBI:60344"/>
    </cofactor>
    <text evidence="1">Binds 1 heme b (iron(II)-protoporphyrin IX) group per dimer.</text>
</comment>
<comment type="subunit">
    <text evidence="1">Homodimer or homotetramer.</text>
</comment>
<comment type="PTM">
    <text evidence="1">Formation of the three residue Trp-Tyr-Met cross-link is important for the catalase, but not the peroxidase activity of the enzyme.</text>
</comment>
<comment type="similarity">
    <text evidence="1">Belongs to the peroxidase family. Peroxidase/catalase subfamily.</text>
</comment>